<protein>
    <recommendedName>
        <fullName>Tail virion protein G7P</fullName>
    </recommendedName>
    <alternativeName>
        <fullName>Coat protein C, polypeptide I</fullName>
    </alternativeName>
    <alternativeName>
        <fullName>Gene 7 protein</fullName>
        <shortName>G7P</shortName>
    </alternativeName>
</protein>
<gene>
    <name type="primary">VII</name>
</gene>
<keyword id="KW-1043">Host membrane</keyword>
<keyword id="KW-0472">Membrane</keyword>
<keyword id="KW-1185">Reference proteome</keyword>
<keyword id="KW-0812">Transmembrane</keyword>
<keyword id="KW-1133">Transmembrane helix</keyword>
<keyword id="KW-0946">Virion</keyword>
<dbReference type="EMBL" id="X14336">
    <property type="protein sequence ID" value="CAA32515.1"/>
    <property type="molecule type" value="Genomic_DNA"/>
</dbReference>
<dbReference type="PIR" id="S08088">
    <property type="entry name" value="S08088"/>
</dbReference>
<dbReference type="RefSeq" id="NP_039618.1">
    <property type="nucleotide sequence ID" value="NC_001332.1"/>
</dbReference>
<dbReference type="GeneID" id="1260720"/>
<dbReference type="KEGG" id="vg:1260720"/>
<dbReference type="Proteomes" id="UP000000373">
    <property type="component" value="Genome"/>
</dbReference>
<dbReference type="GO" id="GO:0033644">
    <property type="term" value="C:host cell membrane"/>
    <property type="evidence" value="ECO:0007669"/>
    <property type="project" value="UniProtKB-SubCell"/>
</dbReference>
<dbReference type="GO" id="GO:0016020">
    <property type="term" value="C:membrane"/>
    <property type="evidence" value="ECO:0007669"/>
    <property type="project" value="UniProtKB-KW"/>
</dbReference>
<dbReference type="GO" id="GO:0044423">
    <property type="term" value="C:virion component"/>
    <property type="evidence" value="ECO:0007669"/>
    <property type="project" value="UniProtKB-KW"/>
</dbReference>
<dbReference type="InterPro" id="IPR045539">
    <property type="entry name" value="Inovirus_G7P_2"/>
</dbReference>
<dbReference type="Pfam" id="PF19978">
    <property type="entry name" value="Inovirus_G7P_2"/>
    <property type="match status" value="1"/>
</dbReference>
<evidence type="ECO:0000250" key="1"/>
<evidence type="ECO:0000255" key="2"/>
<evidence type="ECO:0000305" key="3"/>
<sequence>MSDELIHVVIALGLVISFGLGAITAGVLR</sequence>
<proteinExistence type="inferred from homology"/>
<organismHost>
    <name type="scientific">Escherichia coli</name>
    <dbReference type="NCBI Taxonomy" id="562"/>
</organismHost>
<feature type="chain" id="PRO_0000098178" description="Tail virion protein G7P">
    <location>
        <begin position="1"/>
        <end position="29"/>
    </location>
</feature>
<feature type="transmembrane region" description="Helical" evidence="2">
    <location>
        <begin position="8"/>
        <end position="28"/>
    </location>
</feature>
<accession>P15413</accession>
<comment type="function">
    <text evidence="1">May initiate with G9P the virion concomitant assembly-budding process, by interacting with the packaging signal of the viral genome. The assembly-budding takes place at the host inner membrane. In turn, G7P and G9P are present at the end of the filamentous virion that emerges first from the bacterial host (By similarity).</text>
</comment>
<comment type="subcellular location">
    <subcellularLocation>
        <location evidence="3">Virion</location>
    </subcellularLocation>
    <subcellularLocation>
        <location evidence="3">Host membrane</location>
        <topology evidence="3">Single-pass membrane protein</topology>
    </subcellularLocation>
    <text evidence="1">Prior to assembly, is found associated with the bacterial host inner membrane. There are about five copies of this protein per mature phage that are located on the tail side of the filamentous virion with G9P (By similarity).</text>
</comment>
<comment type="similarity">
    <text evidence="3">Belongs to the inovirus G7P protein family.</text>
</comment>
<organism>
    <name type="scientific">Enterobacteria phage I2-2</name>
    <name type="common">Bacteriophage I2-2</name>
    <dbReference type="NCBI Taxonomy" id="10869"/>
    <lineage>
        <taxon>Viruses</taxon>
        <taxon>Monodnaviria</taxon>
        <taxon>Loebvirae</taxon>
        <taxon>Hofneiviricota</taxon>
        <taxon>Faserviricetes</taxon>
        <taxon>Tubulavirales</taxon>
        <taxon>Inoviridae</taxon>
        <taxon>Lineavirus</taxon>
    </lineage>
</organism>
<name>G7P_BPI22</name>
<reference key="1">
    <citation type="journal article" date="1992" name="J. Mol. Evol.">
        <title>Nucleotide sequence of the genome of the filamentous bacteriophage I2-2: module evolution of the filamentous phage genome.</title>
        <authorList>
            <person name="Stassen A.P."/>
            <person name="Schonmakers E.F."/>
            <person name="Yu M."/>
            <person name="Schoenmakers J.G."/>
            <person name="Konings R.N.H."/>
        </authorList>
    </citation>
    <scope>NUCLEOTIDE SEQUENCE [GENOMIC DNA]</scope>
</reference>